<organism>
    <name type="scientific">Maridesulfovibrio salexigens (strain ATCC 14822 / DSM 2638 / NCIMB 8403 / VKM B-1763)</name>
    <name type="common">Desulfovibrio salexigens</name>
    <dbReference type="NCBI Taxonomy" id="526222"/>
    <lineage>
        <taxon>Bacteria</taxon>
        <taxon>Pseudomonadati</taxon>
        <taxon>Thermodesulfobacteriota</taxon>
        <taxon>Desulfovibrionia</taxon>
        <taxon>Desulfovibrionales</taxon>
        <taxon>Desulfovibrionaceae</taxon>
        <taxon>Maridesulfovibrio</taxon>
    </lineage>
</organism>
<sequence>MNKYFLAGIISVVTLVLDQVTKIAVREKMVLWTSETVIPGFFNLVHVVNKGAAFGFLNRADITWQRNFFVVVTIIALGAIGMLLKSAEEKDKFQILGLGFVLGGAIGNLIDRILYHQVTDFLDFYYGSHHYPAFNVADIAICLGAFAMIVSFYKNK</sequence>
<name>LSPA_MARSD</name>
<reference key="1">
    <citation type="submission" date="2009-06" db="EMBL/GenBank/DDBJ databases">
        <title>Complete sequence of Desulfovibrio salexigens DSM 2638.</title>
        <authorList>
            <consortium name="US DOE Joint Genome Institute"/>
            <person name="Lucas S."/>
            <person name="Copeland A."/>
            <person name="Lapidus A."/>
            <person name="Glavina del Rio T."/>
            <person name="Tice H."/>
            <person name="Bruce D."/>
            <person name="Goodwin L."/>
            <person name="Pitluck S."/>
            <person name="Munk A.C."/>
            <person name="Brettin T."/>
            <person name="Detter J.C."/>
            <person name="Han C."/>
            <person name="Tapia R."/>
            <person name="Larimer F."/>
            <person name="Land M."/>
            <person name="Hauser L."/>
            <person name="Kyrpides N."/>
            <person name="Anderson I."/>
            <person name="Wall J.D."/>
            <person name="Arkin A.P."/>
            <person name="Dehal P."/>
            <person name="Chivian D."/>
            <person name="Giles B."/>
            <person name="Hazen T.C."/>
        </authorList>
    </citation>
    <scope>NUCLEOTIDE SEQUENCE [LARGE SCALE GENOMIC DNA]</scope>
    <source>
        <strain>ATCC 14822 / DSM 2638 / NCIMB 8403 / VKM B-1763</strain>
    </source>
</reference>
<keyword id="KW-0064">Aspartyl protease</keyword>
<keyword id="KW-0997">Cell inner membrane</keyword>
<keyword id="KW-1003">Cell membrane</keyword>
<keyword id="KW-0378">Hydrolase</keyword>
<keyword id="KW-0472">Membrane</keyword>
<keyword id="KW-0645">Protease</keyword>
<keyword id="KW-1185">Reference proteome</keyword>
<keyword id="KW-0812">Transmembrane</keyword>
<keyword id="KW-1133">Transmembrane helix</keyword>
<comment type="function">
    <text evidence="1">This protein specifically catalyzes the removal of signal peptides from prolipoproteins.</text>
</comment>
<comment type="catalytic activity">
    <reaction evidence="1">
        <text>Release of signal peptides from bacterial membrane prolipoproteins. Hydrolyzes -Xaa-Yaa-Zaa-|-(S,diacylglyceryl)Cys-, in which Xaa is hydrophobic (preferably Leu), and Yaa (Ala or Ser) and Zaa (Gly or Ala) have small, neutral side chains.</text>
        <dbReference type="EC" id="3.4.23.36"/>
    </reaction>
</comment>
<comment type="pathway">
    <text evidence="1">Protein modification; lipoprotein biosynthesis (signal peptide cleavage).</text>
</comment>
<comment type="subcellular location">
    <subcellularLocation>
        <location evidence="1">Cell inner membrane</location>
        <topology evidence="1">Multi-pass membrane protein</topology>
    </subcellularLocation>
</comment>
<comment type="similarity">
    <text evidence="1">Belongs to the peptidase A8 family.</text>
</comment>
<accession>C6BV90</accession>
<proteinExistence type="inferred from homology"/>
<dbReference type="EC" id="3.4.23.36" evidence="1"/>
<dbReference type="EMBL" id="CP001649">
    <property type="protein sequence ID" value="ACS80065.1"/>
    <property type="molecule type" value="Genomic_DNA"/>
</dbReference>
<dbReference type="RefSeq" id="WP_015851881.1">
    <property type="nucleotide sequence ID" value="NC_012881.1"/>
</dbReference>
<dbReference type="SMR" id="C6BV90"/>
<dbReference type="STRING" id="526222.Desal_2005"/>
<dbReference type="KEGG" id="dsa:Desal_2005"/>
<dbReference type="eggNOG" id="COG0597">
    <property type="taxonomic scope" value="Bacteria"/>
</dbReference>
<dbReference type="HOGENOM" id="CLU_083252_4_0_7"/>
<dbReference type="OrthoDB" id="9810259at2"/>
<dbReference type="UniPathway" id="UPA00665"/>
<dbReference type="Proteomes" id="UP000002601">
    <property type="component" value="Chromosome"/>
</dbReference>
<dbReference type="GO" id="GO:0005886">
    <property type="term" value="C:plasma membrane"/>
    <property type="evidence" value="ECO:0007669"/>
    <property type="project" value="UniProtKB-SubCell"/>
</dbReference>
<dbReference type="GO" id="GO:0004190">
    <property type="term" value="F:aspartic-type endopeptidase activity"/>
    <property type="evidence" value="ECO:0007669"/>
    <property type="project" value="UniProtKB-UniRule"/>
</dbReference>
<dbReference type="GO" id="GO:0006508">
    <property type="term" value="P:proteolysis"/>
    <property type="evidence" value="ECO:0007669"/>
    <property type="project" value="UniProtKB-KW"/>
</dbReference>
<dbReference type="HAMAP" id="MF_00161">
    <property type="entry name" value="LspA"/>
    <property type="match status" value="1"/>
</dbReference>
<dbReference type="InterPro" id="IPR001872">
    <property type="entry name" value="Peptidase_A8"/>
</dbReference>
<dbReference type="NCBIfam" id="TIGR00077">
    <property type="entry name" value="lspA"/>
    <property type="match status" value="1"/>
</dbReference>
<dbReference type="PANTHER" id="PTHR33695">
    <property type="entry name" value="LIPOPROTEIN SIGNAL PEPTIDASE"/>
    <property type="match status" value="1"/>
</dbReference>
<dbReference type="PANTHER" id="PTHR33695:SF1">
    <property type="entry name" value="LIPOPROTEIN SIGNAL PEPTIDASE"/>
    <property type="match status" value="1"/>
</dbReference>
<dbReference type="Pfam" id="PF01252">
    <property type="entry name" value="Peptidase_A8"/>
    <property type="match status" value="1"/>
</dbReference>
<dbReference type="PRINTS" id="PR00781">
    <property type="entry name" value="LIPOSIGPTASE"/>
</dbReference>
<dbReference type="PROSITE" id="PS00855">
    <property type="entry name" value="SPASE_II"/>
    <property type="match status" value="1"/>
</dbReference>
<protein>
    <recommendedName>
        <fullName evidence="1">Lipoprotein signal peptidase</fullName>
        <ecNumber evidence="1">3.4.23.36</ecNumber>
    </recommendedName>
    <alternativeName>
        <fullName evidence="1">Prolipoprotein signal peptidase</fullName>
    </alternativeName>
    <alternativeName>
        <fullName evidence="1">Signal peptidase II</fullName>
        <shortName evidence="1">SPase II</shortName>
    </alternativeName>
</protein>
<gene>
    <name evidence="1" type="primary">lspA</name>
    <name type="ordered locus">Desal_2005</name>
</gene>
<feature type="chain" id="PRO_1000203591" description="Lipoprotein signal peptidase">
    <location>
        <begin position="1"/>
        <end position="156"/>
    </location>
</feature>
<feature type="transmembrane region" description="Helical" evidence="1">
    <location>
        <begin position="37"/>
        <end position="57"/>
    </location>
</feature>
<feature type="transmembrane region" description="Helical" evidence="1">
    <location>
        <begin position="68"/>
        <end position="88"/>
    </location>
</feature>
<feature type="transmembrane region" description="Helical" evidence="1">
    <location>
        <begin position="95"/>
        <end position="115"/>
    </location>
</feature>
<feature type="transmembrane region" description="Helical" evidence="1">
    <location>
        <begin position="133"/>
        <end position="153"/>
    </location>
</feature>
<feature type="active site" evidence="1">
    <location>
        <position position="120"/>
    </location>
</feature>
<feature type="active site" evidence="1">
    <location>
        <position position="138"/>
    </location>
</feature>
<evidence type="ECO:0000255" key="1">
    <source>
        <dbReference type="HAMAP-Rule" id="MF_00161"/>
    </source>
</evidence>